<accession>Q820Q8</accession>
<proteinExistence type="inferred from homology"/>
<gene>
    <name evidence="1" type="primary">rplR</name>
    <name type="ordered locus">NE0417</name>
</gene>
<evidence type="ECO:0000255" key="1">
    <source>
        <dbReference type="HAMAP-Rule" id="MF_01337"/>
    </source>
</evidence>
<evidence type="ECO:0000305" key="2"/>
<protein>
    <recommendedName>
        <fullName evidence="1">Large ribosomal subunit protein uL18</fullName>
    </recommendedName>
    <alternativeName>
        <fullName evidence="2">50S ribosomal protein L18</fullName>
    </alternativeName>
</protein>
<sequence>MLLNTKQMRLRRAKATRIKIGNSRQFRLSVHKSNNHIYAQILDPSSNRVIVSASTVEAEVKKQYPSGGTIEAAKYVGHLVAKKSIESQIYEVAFDRSGFKYHGRIKALADAARSAGMKF</sequence>
<feature type="chain" id="PRO_0000131309" description="Large ribosomal subunit protein uL18">
    <location>
        <begin position="1"/>
        <end position="119"/>
    </location>
</feature>
<name>RL18_NITEU</name>
<organism>
    <name type="scientific">Nitrosomonas europaea (strain ATCC 19718 / CIP 103999 / KCTC 2705 / NBRC 14298)</name>
    <dbReference type="NCBI Taxonomy" id="228410"/>
    <lineage>
        <taxon>Bacteria</taxon>
        <taxon>Pseudomonadati</taxon>
        <taxon>Pseudomonadota</taxon>
        <taxon>Betaproteobacteria</taxon>
        <taxon>Nitrosomonadales</taxon>
        <taxon>Nitrosomonadaceae</taxon>
        <taxon>Nitrosomonas</taxon>
    </lineage>
</organism>
<dbReference type="EMBL" id="AL954747">
    <property type="protein sequence ID" value="CAD84328.1"/>
    <property type="molecule type" value="Genomic_DNA"/>
</dbReference>
<dbReference type="RefSeq" id="WP_011111052.1">
    <property type="nucleotide sequence ID" value="NC_004757.1"/>
</dbReference>
<dbReference type="SMR" id="Q820Q8"/>
<dbReference type="STRING" id="228410.NE0417"/>
<dbReference type="GeneID" id="87103625"/>
<dbReference type="KEGG" id="neu:NE0417"/>
<dbReference type="eggNOG" id="COG0256">
    <property type="taxonomic scope" value="Bacteria"/>
</dbReference>
<dbReference type="HOGENOM" id="CLU_098841_0_1_4"/>
<dbReference type="OrthoDB" id="9810939at2"/>
<dbReference type="PhylomeDB" id="Q820Q8"/>
<dbReference type="Proteomes" id="UP000001416">
    <property type="component" value="Chromosome"/>
</dbReference>
<dbReference type="GO" id="GO:0022625">
    <property type="term" value="C:cytosolic large ribosomal subunit"/>
    <property type="evidence" value="ECO:0007669"/>
    <property type="project" value="TreeGrafter"/>
</dbReference>
<dbReference type="GO" id="GO:0008097">
    <property type="term" value="F:5S rRNA binding"/>
    <property type="evidence" value="ECO:0007669"/>
    <property type="project" value="TreeGrafter"/>
</dbReference>
<dbReference type="GO" id="GO:0003735">
    <property type="term" value="F:structural constituent of ribosome"/>
    <property type="evidence" value="ECO:0007669"/>
    <property type="project" value="InterPro"/>
</dbReference>
<dbReference type="GO" id="GO:0006412">
    <property type="term" value="P:translation"/>
    <property type="evidence" value="ECO:0007669"/>
    <property type="project" value="UniProtKB-UniRule"/>
</dbReference>
<dbReference type="CDD" id="cd00432">
    <property type="entry name" value="Ribosomal_L18_L5e"/>
    <property type="match status" value="1"/>
</dbReference>
<dbReference type="FunFam" id="3.30.420.100:FF:000001">
    <property type="entry name" value="50S ribosomal protein L18"/>
    <property type="match status" value="1"/>
</dbReference>
<dbReference type="Gene3D" id="3.30.420.100">
    <property type="match status" value="1"/>
</dbReference>
<dbReference type="HAMAP" id="MF_01337_B">
    <property type="entry name" value="Ribosomal_uL18_B"/>
    <property type="match status" value="1"/>
</dbReference>
<dbReference type="InterPro" id="IPR004389">
    <property type="entry name" value="Ribosomal_uL18_bac-type"/>
</dbReference>
<dbReference type="InterPro" id="IPR005484">
    <property type="entry name" value="Ribosomal_uL18_bac/euk"/>
</dbReference>
<dbReference type="NCBIfam" id="TIGR00060">
    <property type="entry name" value="L18_bact"/>
    <property type="match status" value="1"/>
</dbReference>
<dbReference type="PANTHER" id="PTHR12899">
    <property type="entry name" value="39S RIBOSOMAL PROTEIN L18, MITOCHONDRIAL"/>
    <property type="match status" value="1"/>
</dbReference>
<dbReference type="PANTHER" id="PTHR12899:SF3">
    <property type="entry name" value="LARGE RIBOSOMAL SUBUNIT PROTEIN UL18M"/>
    <property type="match status" value="1"/>
</dbReference>
<dbReference type="Pfam" id="PF00861">
    <property type="entry name" value="Ribosomal_L18p"/>
    <property type="match status" value="1"/>
</dbReference>
<dbReference type="SUPFAM" id="SSF53137">
    <property type="entry name" value="Translational machinery components"/>
    <property type="match status" value="1"/>
</dbReference>
<keyword id="KW-1185">Reference proteome</keyword>
<keyword id="KW-0687">Ribonucleoprotein</keyword>
<keyword id="KW-0689">Ribosomal protein</keyword>
<keyword id="KW-0694">RNA-binding</keyword>
<keyword id="KW-0699">rRNA-binding</keyword>
<comment type="function">
    <text evidence="1">This is one of the proteins that bind and probably mediate the attachment of the 5S RNA into the large ribosomal subunit, where it forms part of the central protuberance.</text>
</comment>
<comment type="subunit">
    <text evidence="1">Part of the 50S ribosomal subunit; part of the 5S rRNA/L5/L18/L25 subcomplex. Contacts the 5S and 23S rRNAs.</text>
</comment>
<comment type="similarity">
    <text evidence="1">Belongs to the universal ribosomal protein uL18 family.</text>
</comment>
<reference key="1">
    <citation type="journal article" date="2003" name="J. Bacteriol.">
        <title>Complete genome sequence of the ammonia-oxidizing bacterium and obligate chemolithoautotroph Nitrosomonas europaea.</title>
        <authorList>
            <person name="Chain P."/>
            <person name="Lamerdin J.E."/>
            <person name="Larimer F.W."/>
            <person name="Regala W."/>
            <person name="Lao V."/>
            <person name="Land M.L."/>
            <person name="Hauser L."/>
            <person name="Hooper A.B."/>
            <person name="Klotz M.G."/>
            <person name="Norton J."/>
            <person name="Sayavedra-Soto L.A."/>
            <person name="Arciero D.M."/>
            <person name="Hommes N.G."/>
            <person name="Whittaker M.M."/>
            <person name="Arp D.J."/>
        </authorList>
    </citation>
    <scope>NUCLEOTIDE SEQUENCE [LARGE SCALE GENOMIC DNA]</scope>
    <source>
        <strain>ATCC 19718 / CIP 103999 / KCTC 2705 / NBRC 14298</strain>
    </source>
</reference>